<feature type="chain" id="PRO_0000370158" description="8-amino-3,8-dideoxy-manno-octulosonate cytidylyltransferase">
    <location>
        <begin position="1"/>
        <end position="245"/>
    </location>
</feature>
<dbReference type="EC" id="2.7.7.90" evidence="1"/>
<dbReference type="EMBL" id="CP000446">
    <property type="protein sequence ID" value="ABI38925.1"/>
    <property type="molecule type" value="Genomic_DNA"/>
</dbReference>
<dbReference type="RefSeq" id="WP_011622622.1">
    <property type="nucleotide sequence ID" value="NC_008321.1"/>
</dbReference>
<dbReference type="SMR" id="Q0HJ42"/>
<dbReference type="GeneID" id="94727860"/>
<dbReference type="KEGG" id="she:Shewmr4_1851"/>
<dbReference type="HOGENOM" id="CLU_065038_0_1_6"/>
<dbReference type="UniPathway" id="UPA00030"/>
<dbReference type="GO" id="GO:0005829">
    <property type="term" value="C:cytosol"/>
    <property type="evidence" value="ECO:0007669"/>
    <property type="project" value="TreeGrafter"/>
</dbReference>
<dbReference type="GO" id="GO:0008690">
    <property type="term" value="F:3-deoxy-manno-octulosonate cytidylyltransferase activity"/>
    <property type="evidence" value="ECO:0007669"/>
    <property type="project" value="InterPro"/>
</dbReference>
<dbReference type="GO" id="GO:0009103">
    <property type="term" value="P:lipopolysaccharide biosynthetic process"/>
    <property type="evidence" value="ECO:0007669"/>
    <property type="project" value="UniProtKB-UniRule"/>
</dbReference>
<dbReference type="CDD" id="cd02517">
    <property type="entry name" value="CMP-KDO-Synthetase"/>
    <property type="match status" value="1"/>
</dbReference>
<dbReference type="FunFam" id="3.90.550.10:FF:000168">
    <property type="entry name" value="8-amino-3,8-dideoxy-manno-octulosonate cytidylyltransferase"/>
    <property type="match status" value="1"/>
</dbReference>
<dbReference type="Gene3D" id="3.90.550.10">
    <property type="entry name" value="Spore Coat Polysaccharide Biosynthesis Protein SpsA, Chain A"/>
    <property type="match status" value="1"/>
</dbReference>
<dbReference type="HAMAP" id="MF_00057">
    <property type="entry name" value="KdsB"/>
    <property type="match status" value="1"/>
</dbReference>
<dbReference type="InterPro" id="IPR003329">
    <property type="entry name" value="Cytidylyl_trans"/>
</dbReference>
<dbReference type="InterPro" id="IPR004528">
    <property type="entry name" value="KdsB"/>
</dbReference>
<dbReference type="InterPro" id="IPR029044">
    <property type="entry name" value="Nucleotide-diphossugar_trans"/>
</dbReference>
<dbReference type="NCBIfam" id="TIGR00466">
    <property type="entry name" value="kdsB"/>
    <property type="match status" value="1"/>
</dbReference>
<dbReference type="NCBIfam" id="NF003950">
    <property type="entry name" value="PRK05450.1-3"/>
    <property type="match status" value="1"/>
</dbReference>
<dbReference type="NCBIfam" id="NF003952">
    <property type="entry name" value="PRK05450.1-5"/>
    <property type="match status" value="1"/>
</dbReference>
<dbReference type="NCBIfam" id="NF009905">
    <property type="entry name" value="PRK13368.1"/>
    <property type="match status" value="1"/>
</dbReference>
<dbReference type="PANTHER" id="PTHR42866">
    <property type="entry name" value="3-DEOXY-MANNO-OCTULOSONATE CYTIDYLYLTRANSFERASE"/>
    <property type="match status" value="1"/>
</dbReference>
<dbReference type="PANTHER" id="PTHR42866:SF2">
    <property type="entry name" value="3-DEOXY-MANNO-OCTULOSONATE CYTIDYLYLTRANSFERASE, MITOCHONDRIAL"/>
    <property type="match status" value="1"/>
</dbReference>
<dbReference type="Pfam" id="PF02348">
    <property type="entry name" value="CTP_transf_3"/>
    <property type="match status" value="1"/>
</dbReference>
<dbReference type="SUPFAM" id="SSF53448">
    <property type="entry name" value="Nucleotide-diphospho-sugar transferases"/>
    <property type="match status" value="1"/>
</dbReference>
<accession>Q0HJ42</accession>
<organism>
    <name type="scientific">Shewanella sp. (strain MR-4)</name>
    <dbReference type="NCBI Taxonomy" id="60480"/>
    <lineage>
        <taxon>Bacteria</taxon>
        <taxon>Pseudomonadati</taxon>
        <taxon>Pseudomonadota</taxon>
        <taxon>Gammaproteobacteria</taxon>
        <taxon>Alteromonadales</taxon>
        <taxon>Shewanellaceae</taxon>
        <taxon>Shewanella</taxon>
    </lineage>
</organism>
<name>KDSB_SHESM</name>
<protein>
    <recommendedName>
        <fullName evidence="1">8-amino-3,8-dideoxy-manno-octulosonate cytidylyltransferase</fullName>
        <ecNumber evidence="1">2.7.7.90</ecNumber>
    </recommendedName>
    <alternativeName>
        <fullName evidence="1">CMP-8-amino-3,8-dideoxy-manno-octulosonate synthase</fullName>
    </alternativeName>
</protein>
<comment type="function">
    <text evidence="1">Activates KDO8N (a required 8-carbon sugar) for incorporation into bacterial lipopolysaccharide in the Shewanella genus.</text>
</comment>
<comment type="catalytic activity">
    <reaction evidence="1">
        <text>8-amino-3,8-dideoxy-alpha-D-manno-octulosonate + CTP = CMP-8-amino-3,8-dideoxy-alpha-D-manno-oct-2-ulosonate + diphosphate</text>
        <dbReference type="Rhea" id="RHEA:49284"/>
        <dbReference type="ChEBI" id="CHEBI:33019"/>
        <dbReference type="ChEBI" id="CHEBI:37563"/>
        <dbReference type="ChEBI" id="CHEBI:87091"/>
        <dbReference type="ChEBI" id="CHEBI:91089"/>
        <dbReference type="EC" id="2.7.7.90"/>
    </reaction>
</comment>
<comment type="pathway">
    <text evidence="1">Bacterial outer membrane biogenesis; lipopolysaccharide biosynthesis.</text>
</comment>
<comment type="subcellular location">
    <subcellularLocation>
        <location evidence="1">Cytoplasm</location>
    </subcellularLocation>
</comment>
<comment type="similarity">
    <text evidence="1">Belongs to the KdsB family.</text>
</comment>
<proteinExistence type="inferred from homology"/>
<evidence type="ECO:0000255" key="1">
    <source>
        <dbReference type="HAMAP-Rule" id="MF_00057"/>
    </source>
</evidence>
<sequence>MNVTLLIPARYGSSRFPGKPLAPINGKPMIQHVYERASLAKGLTNIYVATDDERIKSAVEGFGGKVVMTSPDAASGTDRINDAINQLGLKDDDLVINLQGDQPLIDPTSIEQVISLFERHPGEFEMATLGYEIVNKAELDDPMHVKMVFDNDYYALYFSRARIPFGRDTKDYPVYKHLGVYAYTRRFVQAFAALPLGRLEDLEKLEQLRALEHGHKIKVAISAFDSIEVDTPEDIRKCEQRLAVD</sequence>
<keyword id="KW-0963">Cytoplasm</keyword>
<keyword id="KW-0448">Lipopolysaccharide biosynthesis</keyword>
<keyword id="KW-0548">Nucleotidyltransferase</keyword>
<keyword id="KW-0808">Transferase</keyword>
<reference key="1">
    <citation type="submission" date="2006-08" db="EMBL/GenBank/DDBJ databases">
        <title>Complete sequence of Shewanella sp. MR-4.</title>
        <authorList>
            <consortium name="US DOE Joint Genome Institute"/>
            <person name="Copeland A."/>
            <person name="Lucas S."/>
            <person name="Lapidus A."/>
            <person name="Barry K."/>
            <person name="Detter J.C."/>
            <person name="Glavina del Rio T."/>
            <person name="Hammon N."/>
            <person name="Israni S."/>
            <person name="Dalin E."/>
            <person name="Tice H."/>
            <person name="Pitluck S."/>
            <person name="Kiss H."/>
            <person name="Brettin T."/>
            <person name="Bruce D."/>
            <person name="Han C."/>
            <person name="Tapia R."/>
            <person name="Gilna P."/>
            <person name="Schmutz J."/>
            <person name="Larimer F."/>
            <person name="Land M."/>
            <person name="Hauser L."/>
            <person name="Kyrpides N."/>
            <person name="Mikhailova N."/>
            <person name="Nealson K."/>
            <person name="Konstantinidis K."/>
            <person name="Klappenbach J."/>
            <person name="Tiedje J."/>
            <person name="Richardson P."/>
        </authorList>
    </citation>
    <scope>NUCLEOTIDE SEQUENCE [LARGE SCALE GENOMIC DNA]</scope>
    <source>
        <strain>MR-4</strain>
    </source>
</reference>
<gene>
    <name evidence="1" type="primary">kdsB</name>
    <name type="ordered locus">Shewmr4_1851</name>
</gene>